<dbReference type="EC" id="7.1.1.-" evidence="1"/>
<dbReference type="EMBL" id="BX569695">
    <property type="protein sequence ID" value="CAE08734.1"/>
    <property type="molecule type" value="Genomic_DNA"/>
</dbReference>
<dbReference type="RefSeq" id="WP_011129075.1">
    <property type="nucleotide sequence ID" value="NC_005070.1"/>
</dbReference>
<dbReference type="SMR" id="Q7U453"/>
<dbReference type="STRING" id="84588.SYNW2219"/>
<dbReference type="KEGG" id="syw:SYNW2219"/>
<dbReference type="eggNOG" id="ENOG5032XZT">
    <property type="taxonomic scope" value="Bacteria"/>
</dbReference>
<dbReference type="HOGENOM" id="CLU_195299_0_0_3"/>
<dbReference type="BioCyc" id="MetaCyc:TX72_RS11185-MONOMER"/>
<dbReference type="Proteomes" id="UP000001422">
    <property type="component" value="Chromosome"/>
</dbReference>
<dbReference type="GO" id="GO:0031676">
    <property type="term" value="C:plasma membrane-derived thylakoid membrane"/>
    <property type="evidence" value="ECO:0007669"/>
    <property type="project" value="UniProtKB-SubCell"/>
</dbReference>
<dbReference type="GO" id="GO:0016655">
    <property type="term" value="F:oxidoreductase activity, acting on NAD(P)H, quinone or similar compound as acceptor"/>
    <property type="evidence" value="ECO:0007669"/>
    <property type="project" value="UniProtKB-UniRule"/>
</dbReference>
<dbReference type="GO" id="GO:0048038">
    <property type="term" value="F:quinone binding"/>
    <property type="evidence" value="ECO:0007669"/>
    <property type="project" value="UniProtKB-KW"/>
</dbReference>
<dbReference type="HAMAP" id="MF_01354">
    <property type="entry name" value="NDH1_NDH1O"/>
    <property type="match status" value="1"/>
</dbReference>
<dbReference type="InterPro" id="IPR020905">
    <property type="entry name" value="NdhO"/>
</dbReference>
<dbReference type="Pfam" id="PF11910">
    <property type="entry name" value="NdhO"/>
    <property type="match status" value="1"/>
</dbReference>
<protein>
    <recommendedName>
        <fullName evidence="1">NAD(P)H-quinone oxidoreductase subunit O</fullName>
        <ecNumber evidence="1">7.1.1.-</ecNumber>
    </recommendedName>
    <alternativeName>
        <fullName evidence="1">NAD(P)H dehydrogenase I subunit O</fullName>
    </alternativeName>
    <alternativeName>
        <fullName>NDH-1 subunit O</fullName>
    </alternativeName>
    <alternativeName>
        <fullName>NDH-O</fullName>
    </alternativeName>
</protein>
<comment type="function">
    <text evidence="1">NDH-1 shuttles electrons from an unknown electron donor, via FMN and iron-sulfur (Fe-S) centers, to quinones in the respiratory and/or the photosynthetic chain. The immediate electron acceptor for the enzyme in this species is believed to be plastoquinone. Couples the redox reaction to proton translocation, and thus conserves the redox energy in a proton gradient. Cyanobacterial NDH-1 also plays a role in inorganic carbon-concentration.</text>
</comment>
<comment type="catalytic activity">
    <reaction evidence="1">
        <text>a plastoquinone + NADH + (n+1) H(+)(in) = a plastoquinol + NAD(+) + n H(+)(out)</text>
        <dbReference type="Rhea" id="RHEA:42608"/>
        <dbReference type="Rhea" id="RHEA-COMP:9561"/>
        <dbReference type="Rhea" id="RHEA-COMP:9562"/>
        <dbReference type="ChEBI" id="CHEBI:15378"/>
        <dbReference type="ChEBI" id="CHEBI:17757"/>
        <dbReference type="ChEBI" id="CHEBI:57540"/>
        <dbReference type="ChEBI" id="CHEBI:57945"/>
        <dbReference type="ChEBI" id="CHEBI:62192"/>
    </reaction>
</comment>
<comment type="catalytic activity">
    <reaction evidence="1">
        <text>a plastoquinone + NADPH + (n+1) H(+)(in) = a plastoquinol + NADP(+) + n H(+)(out)</text>
        <dbReference type="Rhea" id="RHEA:42612"/>
        <dbReference type="Rhea" id="RHEA-COMP:9561"/>
        <dbReference type="Rhea" id="RHEA-COMP:9562"/>
        <dbReference type="ChEBI" id="CHEBI:15378"/>
        <dbReference type="ChEBI" id="CHEBI:17757"/>
        <dbReference type="ChEBI" id="CHEBI:57783"/>
        <dbReference type="ChEBI" id="CHEBI:58349"/>
        <dbReference type="ChEBI" id="CHEBI:62192"/>
    </reaction>
</comment>
<comment type="subunit">
    <text evidence="1">NDH-1 can be composed of about 15 different subunits; different subcomplexes with different compositions have been identified which probably have different functions.</text>
</comment>
<comment type="subcellular location">
    <subcellularLocation>
        <location evidence="1">Cellular thylakoid membrane</location>
        <topology evidence="1">Peripheral membrane protein</topology>
        <orientation evidence="1">Cytoplasmic side</orientation>
    </subcellularLocation>
</comment>
<comment type="similarity">
    <text evidence="1">Belongs to the complex I NdhO subunit family.</text>
</comment>
<sequence length="84" mass="9118">MAETDSKAPAKAKPAALRKGALVKVNRSAYNDSLEAAASDPTAPDYIFEGPGELLLVKGDYGQVRWNRPVPDVWLRMDQLESCG</sequence>
<organism>
    <name type="scientific">Parasynechococcus marenigrum (strain WH8102)</name>
    <dbReference type="NCBI Taxonomy" id="84588"/>
    <lineage>
        <taxon>Bacteria</taxon>
        <taxon>Bacillati</taxon>
        <taxon>Cyanobacteriota</taxon>
        <taxon>Cyanophyceae</taxon>
        <taxon>Synechococcales</taxon>
        <taxon>Prochlorococcaceae</taxon>
        <taxon>Parasynechococcus</taxon>
        <taxon>Parasynechococcus marenigrum</taxon>
    </lineage>
</organism>
<proteinExistence type="inferred from homology"/>
<feature type="chain" id="PRO_0000353661" description="NAD(P)H-quinone oxidoreductase subunit O">
    <location>
        <begin position="1"/>
        <end position="84"/>
    </location>
</feature>
<accession>Q7U453</accession>
<keyword id="KW-0472">Membrane</keyword>
<keyword id="KW-0520">NAD</keyword>
<keyword id="KW-0521">NADP</keyword>
<keyword id="KW-0618">Plastoquinone</keyword>
<keyword id="KW-0874">Quinone</keyword>
<keyword id="KW-0793">Thylakoid</keyword>
<keyword id="KW-1278">Translocase</keyword>
<keyword id="KW-0813">Transport</keyword>
<name>NDHO_PARMW</name>
<gene>
    <name evidence="1" type="primary">ndhO</name>
    <name type="ordered locus">SYNW2219</name>
</gene>
<reference key="1">
    <citation type="journal article" date="2003" name="Nature">
        <title>The genome of a motile marine Synechococcus.</title>
        <authorList>
            <person name="Palenik B."/>
            <person name="Brahamsha B."/>
            <person name="Larimer F.W."/>
            <person name="Land M.L."/>
            <person name="Hauser L."/>
            <person name="Chain P."/>
            <person name="Lamerdin J.E."/>
            <person name="Regala W."/>
            <person name="Allen E.E."/>
            <person name="McCarren J."/>
            <person name="Paulsen I.T."/>
            <person name="Dufresne A."/>
            <person name="Partensky F."/>
            <person name="Webb E.A."/>
            <person name="Waterbury J."/>
        </authorList>
    </citation>
    <scope>NUCLEOTIDE SEQUENCE [LARGE SCALE GENOMIC DNA]</scope>
    <source>
        <strain>WH8102</strain>
    </source>
</reference>
<evidence type="ECO:0000255" key="1">
    <source>
        <dbReference type="HAMAP-Rule" id="MF_01354"/>
    </source>
</evidence>